<proteinExistence type="evidence at protein level"/>
<dbReference type="EMBL" id="AF229840">
    <property type="protein sequence ID" value="AAF34999.1"/>
    <property type="molecule type" value="mRNA"/>
</dbReference>
<dbReference type="EMBL" id="AK027265">
    <property type="protein sequence ID" value="BAB55006.1"/>
    <property type="status" value="ALT_SEQ"/>
    <property type="molecule type" value="mRNA"/>
</dbReference>
<dbReference type="EMBL" id="AK054571">
    <property type="protein sequence ID" value="BAG51392.1"/>
    <property type="molecule type" value="mRNA"/>
</dbReference>
<dbReference type="EMBL" id="AK297975">
    <property type="protein sequence ID" value="BAG60285.1"/>
    <property type="molecule type" value="mRNA"/>
</dbReference>
<dbReference type="EMBL" id="DB126967">
    <property type="status" value="NOT_ANNOTATED_CDS"/>
    <property type="molecule type" value="mRNA"/>
</dbReference>
<dbReference type="EMBL" id="AL137682">
    <property type="protein sequence ID" value="CAB70873.2"/>
    <property type="molecule type" value="mRNA"/>
</dbReference>
<dbReference type="EMBL" id="DQ314882">
    <property type="protein sequence ID" value="ABC40741.1"/>
    <property type="molecule type" value="Genomic_DNA"/>
</dbReference>
<dbReference type="EMBL" id="AC105024">
    <property type="status" value="NOT_ANNOTATED_CDS"/>
    <property type="molecule type" value="Genomic_DNA"/>
</dbReference>
<dbReference type="EMBL" id="CH471152">
    <property type="protein sequence ID" value="EAW60791.1"/>
    <property type="molecule type" value="Genomic_DNA"/>
</dbReference>
<dbReference type="EMBL" id="BC007450">
    <property type="protein sequence ID" value="AAH07450.1"/>
    <property type="molecule type" value="mRNA"/>
</dbReference>
<dbReference type="EMBL" id="BC063498">
    <property type="protein sequence ID" value="AAH63498.1"/>
    <property type="molecule type" value="mRNA"/>
</dbReference>
<dbReference type="CCDS" id="CCDS11415.1">
    <molecule id="Q9NYR9-1"/>
</dbReference>
<dbReference type="CCDS" id="CCDS45679.1">
    <molecule id="Q9NYR9-3"/>
</dbReference>
<dbReference type="CCDS" id="CCDS45680.1">
    <molecule id="Q9NYR9-4"/>
</dbReference>
<dbReference type="PIR" id="T46440">
    <property type="entry name" value="T46440"/>
</dbReference>
<dbReference type="RefSeq" id="NP_001001349.1">
    <molecule id="Q9NYR9-1"/>
    <property type="nucleotide sequence ID" value="NM_001001349.2"/>
</dbReference>
<dbReference type="RefSeq" id="NP_001138399.1">
    <molecule id="Q9NYR9-1"/>
    <property type="nucleotide sequence ID" value="NM_001144927.2"/>
</dbReference>
<dbReference type="RefSeq" id="NP_001138400.1">
    <molecule id="Q9NYR9-3"/>
    <property type="nucleotide sequence ID" value="NM_001144928.2"/>
</dbReference>
<dbReference type="RefSeq" id="NP_001138401.1">
    <molecule id="Q9NYR9-4"/>
    <property type="nucleotide sequence ID" value="NM_001144929.2"/>
</dbReference>
<dbReference type="RefSeq" id="NP_060065.2">
    <molecule id="Q9NYR9-1"/>
    <property type="nucleotide sequence ID" value="NM_017595.5"/>
</dbReference>
<dbReference type="RefSeq" id="XP_005257308.1">
    <property type="nucleotide sequence ID" value="XM_005257251.1"/>
</dbReference>
<dbReference type="RefSeq" id="XP_047291778.1">
    <molecule id="Q9NYR9-1"/>
    <property type="nucleotide sequence ID" value="XM_047435822.1"/>
</dbReference>
<dbReference type="RefSeq" id="XP_047291779.1">
    <molecule id="Q9NYR9-1"/>
    <property type="nucleotide sequence ID" value="XM_047435823.1"/>
</dbReference>
<dbReference type="RefSeq" id="XP_047291781.1">
    <molecule id="Q9NYR9-3"/>
    <property type="nucleotide sequence ID" value="XM_047435825.1"/>
</dbReference>
<dbReference type="RefSeq" id="XP_047291782.1">
    <molecule id="Q9NYR9-3"/>
    <property type="nucleotide sequence ID" value="XM_047435826.1"/>
</dbReference>
<dbReference type="RefSeq" id="XP_054171807.1">
    <molecule id="Q9NYR9-1"/>
    <property type="nucleotide sequence ID" value="XM_054315832.1"/>
</dbReference>
<dbReference type="RefSeq" id="XP_054171808.1">
    <molecule id="Q9NYR9-1"/>
    <property type="nucleotide sequence ID" value="XM_054315833.1"/>
</dbReference>
<dbReference type="RefSeq" id="XP_054171809.1">
    <molecule id="Q9NYR9-3"/>
    <property type="nucleotide sequence ID" value="XM_054315834.1"/>
</dbReference>
<dbReference type="RefSeq" id="XP_054171810.1">
    <molecule id="Q9NYR9-3"/>
    <property type="nucleotide sequence ID" value="XM_054315835.1"/>
</dbReference>
<dbReference type="SMR" id="Q9NYR9"/>
<dbReference type="BioGRID" id="118388">
    <property type="interactions" value="30"/>
</dbReference>
<dbReference type="FunCoup" id="Q9NYR9">
    <property type="interactions" value="110"/>
</dbReference>
<dbReference type="IntAct" id="Q9NYR9">
    <property type="interactions" value="19"/>
</dbReference>
<dbReference type="MINT" id="Q9NYR9"/>
<dbReference type="STRING" id="9606.ENSP00000303580"/>
<dbReference type="iPTMnet" id="Q9NYR9"/>
<dbReference type="PhosphoSitePlus" id="Q9NYR9"/>
<dbReference type="BioMuta" id="NKIRAS2"/>
<dbReference type="DMDM" id="74734716"/>
<dbReference type="jPOST" id="Q9NYR9"/>
<dbReference type="MassIVE" id="Q9NYR9"/>
<dbReference type="PaxDb" id="9606-ENSP00000303580"/>
<dbReference type="PeptideAtlas" id="Q9NYR9"/>
<dbReference type="ProteomicsDB" id="83269">
    <molecule id="Q9NYR9-1"/>
</dbReference>
<dbReference type="ProteomicsDB" id="83270">
    <molecule id="Q9NYR9-2"/>
</dbReference>
<dbReference type="ProteomicsDB" id="83271">
    <molecule id="Q9NYR9-3"/>
</dbReference>
<dbReference type="Pumba" id="Q9NYR9"/>
<dbReference type="Antibodypedia" id="79897">
    <property type="antibodies" value="210 antibodies from 30 providers"/>
</dbReference>
<dbReference type="DNASU" id="28511"/>
<dbReference type="Ensembl" id="ENST00000307641.9">
    <molecule id="Q9NYR9-1"/>
    <property type="protein sequence ID" value="ENSP00000303580.5"/>
    <property type="gene ID" value="ENSG00000168256.18"/>
</dbReference>
<dbReference type="Ensembl" id="ENST00000393880.5">
    <molecule id="Q9NYR9-1"/>
    <property type="protein sequence ID" value="ENSP00000377458.1"/>
    <property type="gene ID" value="ENSG00000168256.18"/>
</dbReference>
<dbReference type="Ensembl" id="ENST00000393881.7">
    <molecule id="Q9NYR9-1"/>
    <property type="protein sequence ID" value="ENSP00000377459.3"/>
    <property type="gene ID" value="ENSG00000168256.18"/>
</dbReference>
<dbReference type="Ensembl" id="ENST00000393885.9">
    <molecule id="Q9NYR9-1"/>
    <property type="protein sequence ID" value="ENSP00000377463.3"/>
    <property type="gene ID" value="ENSG00000168256.18"/>
</dbReference>
<dbReference type="Ensembl" id="ENST00000449471.8">
    <molecule id="Q9NYR9-3"/>
    <property type="protein sequence ID" value="ENSP00000401976.4"/>
    <property type="gene ID" value="ENSG00000168256.18"/>
</dbReference>
<dbReference type="Ensembl" id="ENST00000479407.5">
    <molecule id="Q9NYR9-4"/>
    <property type="protein sequence ID" value="ENSP00000465633.1"/>
    <property type="gene ID" value="ENSG00000168256.18"/>
</dbReference>
<dbReference type="GeneID" id="28511"/>
<dbReference type="KEGG" id="hsa:28511"/>
<dbReference type="MANE-Select" id="ENST00000393885.9">
    <property type="protein sequence ID" value="ENSP00000377463.3"/>
    <property type="RefSeq nucleotide sequence ID" value="NM_017595.6"/>
    <property type="RefSeq protein sequence ID" value="NP_060065.2"/>
</dbReference>
<dbReference type="UCSC" id="uc002hyq.4">
    <molecule id="Q9NYR9-1"/>
    <property type="organism name" value="human"/>
</dbReference>
<dbReference type="AGR" id="HGNC:17898"/>
<dbReference type="CTD" id="28511"/>
<dbReference type="DisGeNET" id="28511"/>
<dbReference type="GeneCards" id="NKIRAS2"/>
<dbReference type="HGNC" id="HGNC:17898">
    <property type="gene designation" value="NKIRAS2"/>
</dbReference>
<dbReference type="HPA" id="ENSG00000168256">
    <property type="expression patterns" value="Low tissue specificity"/>
</dbReference>
<dbReference type="MIM" id="604497">
    <property type="type" value="gene"/>
</dbReference>
<dbReference type="neXtProt" id="NX_Q9NYR9"/>
<dbReference type="OpenTargets" id="ENSG00000168256"/>
<dbReference type="PharmGKB" id="PA134968907"/>
<dbReference type="VEuPathDB" id="HostDB:ENSG00000168256"/>
<dbReference type="eggNOG" id="KOG3883">
    <property type="taxonomic scope" value="Eukaryota"/>
</dbReference>
<dbReference type="GeneTree" id="ENSGT00940000157943"/>
<dbReference type="HOGENOM" id="CLU_041217_17_1_1"/>
<dbReference type="InParanoid" id="Q9NYR9"/>
<dbReference type="OMA" id="IMDRANN"/>
<dbReference type="OrthoDB" id="10002389at2759"/>
<dbReference type="PAN-GO" id="Q9NYR9">
    <property type="GO annotations" value="3 GO annotations based on evolutionary models"/>
</dbReference>
<dbReference type="PhylomeDB" id="Q9NYR9"/>
<dbReference type="TreeFam" id="TF314483"/>
<dbReference type="PathwayCommons" id="Q9NYR9"/>
<dbReference type="Reactome" id="R-HSA-1810476">
    <property type="pathway name" value="RIP-mediated NFkB activation via ZBP1"/>
</dbReference>
<dbReference type="Reactome" id="R-HSA-445989">
    <property type="pathway name" value="TAK1-dependent IKK and NF-kappa-B activation"/>
</dbReference>
<dbReference type="Reactome" id="R-HSA-933542">
    <property type="pathway name" value="TRAF6 mediated NF-kB activation"/>
</dbReference>
<dbReference type="SignaLink" id="Q9NYR9"/>
<dbReference type="BioGRID-ORCS" id="28511">
    <property type="hits" value="15 hits in 1151 CRISPR screens"/>
</dbReference>
<dbReference type="ChiTaRS" id="NKIRAS2">
    <property type="organism name" value="human"/>
</dbReference>
<dbReference type="GeneWiki" id="NKIRAS2"/>
<dbReference type="GenomeRNAi" id="28511"/>
<dbReference type="Pharos" id="Q9NYR9">
    <property type="development level" value="Tbio"/>
</dbReference>
<dbReference type="PRO" id="PR:Q9NYR9"/>
<dbReference type="Proteomes" id="UP000005640">
    <property type="component" value="Chromosome 17"/>
</dbReference>
<dbReference type="RNAct" id="Q9NYR9">
    <property type="molecule type" value="protein"/>
</dbReference>
<dbReference type="Bgee" id="ENSG00000168256">
    <property type="expression patterns" value="Expressed in cortical plate and 206 other cell types or tissues"/>
</dbReference>
<dbReference type="ExpressionAtlas" id="Q9NYR9">
    <property type="expression patterns" value="baseline and differential"/>
</dbReference>
<dbReference type="GO" id="GO:0005737">
    <property type="term" value="C:cytoplasm"/>
    <property type="evidence" value="ECO:0007669"/>
    <property type="project" value="UniProtKB-SubCell"/>
</dbReference>
<dbReference type="GO" id="GO:0005525">
    <property type="term" value="F:GTP binding"/>
    <property type="evidence" value="ECO:0007669"/>
    <property type="project" value="UniProtKB-KW"/>
</dbReference>
<dbReference type="GO" id="GO:0032794">
    <property type="term" value="F:GTPase activating protein binding"/>
    <property type="evidence" value="ECO:0000318"/>
    <property type="project" value="GO_Central"/>
</dbReference>
<dbReference type="GO" id="GO:0003924">
    <property type="term" value="F:GTPase activity"/>
    <property type="evidence" value="ECO:0000303"/>
    <property type="project" value="UniProtKB"/>
</dbReference>
<dbReference type="GO" id="GO:0006954">
    <property type="term" value="P:inflammatory response"/>
    <property type="evidence" value="ECO:0007669"/>
    <property type="project" value="Ensembl"/>
</dbReference>
<dbReference type="GO" id="GO:0048286">
    <property type="term" value="P:lung alveolus development"/>
    <property type="evidence" value="ECO:0007669"/>
    <property type="project" value="Ensembl"/>
</dbReference>
<dbReference type="GO" id="GO:0043124">
    <property type="term" value="P:negative regulation of canonical NF-kappaB signal transduction"/>
    <property type="evidence" value="ECO:0000303"/>
    <property type="project" value="UniProtKB"/>
</dbReference>
<dbReference type="GO" id="GO:0032484">
    <property type="term" value="P:Ral protein signal transduction"/>
    <property type="evidence" value="ECO:0000318"/>
    <property type="project" value="GO_Central"/>
</dbReference>
<dbReference type="GO" id="GO:0010803">
    <property type="term" value="P:regulation of tumor necrosis factor-mediated signaling pathway"/>
    <property type="evidence" value="ECO:0007669"/>
    <property type="project" value="Ensembl"/>
</dbReference>
<dbReference type="GO" id="GO:0043129">
    <property type="term" value="P:surfactant homeostasis"/>
    <property type="evidence" value="ECO:0007669"/>
    <property type="project" value="Ensembl"/>
</dbReference>
<dbReference type="Gene3D" id="3.40.50.300">
    <property type="entry name" value="P-loop containing nucleotide triphosphate hydrolases"/>
    <property type="match status" value="1"/>
</dbReference>
<dbReference type="InterPro" id="IPR042227">
    <property type="entry name" value="KBRS"/>
</dbReference>
<dbReference type="InterPro" id="IPR027417">
    <property type="entry name" value="P-loop_NTPase"/>
</dbReference>
<dbReference type="InterPro" id="IPR005225">
    <property type="entry name" value="Small_GTP-bd"/>
</dbReference>
<dbReference type="InterPro" id="IPR001806">
    <property type="entry name" value="Small_GTPase"/>
</dbReference>
<dbReference type="NCBIfam" id="TIGR00231">
    <property type="entry name" value="small_GTP"/>
    <property type="match status" value="1"/>
</dbReference>
<dbReference type="PANTHER" id="PTHR46152">
    <property type="entry name" value="NF-KAPPA-B INHIBITOR-INTERACTING RAS-LIKE PROTEIN"/>
    <property type="match status" value="1"/>
</dbReference>
<dbReference type="PANTHER" id="PTHR46152:SF2">
    <property type="entry name" value="NF-KAPPA-B INHIBITOR-INTERACTING RAS-LIKE PROTEIN 2"/>
    <property type="match status" value="1"/>
</dbReference>
<dbReference type="Pfam" id="PF00071">
    <property type="entry name" value="Ras"/>
    <property type="match status" value="1"/>
</dbReference>
<dbReference type="PRINTS" id="PR00449">
    <property type="entry name" value="RASTRNSFRMNG"/>
</dbReference>
<dbReference type="SMART" id="SM00175">
    <property type="entry name" value="RAB"/>
    <property type="match status" value="1"/>
</dbReference>
<dbReference type="SMART" id="SM00173">
    <property type="entry name" value="RAS"/>
    <property type="match status" value="1"/>
</dbReference>
<dbReference type="SUPFAM" id="SSF52540">
    <property type="entry name" value="P-loop containing nucleoside triphosphate hydrolases"/>
    <property type="match status" value="1"/>
</dbReference>
<dbReference type="PROSITE" id="PS51419">
    <property type="entry name" value="RAB"/>
    <property type="match status" value="1"/>
</dbReference>
<protein>
    <recommendedName>
        <fullName>NF-kappa-B inhibitor-interacting Ras-like protein 2</fullName>
    </recommendedName>
    <alternativeName>
        <fullName>I-kappa-B-interacting Ras-like protein 2</fullName>
        <shortName>Kappa B-Ras protein 2</shortName>
        <shortName>KappaB-Ras2</shortName>
    </alternativeName>
</protein>
<sequence length="191" mass="21508">MGKSCKVVVCGQASVGKTSILEQLLYGNHVVGSEMIETQEDIYVGSIETDRGVREQVRFYDTRGLRDGAELPRHCFSCTDGYVLVYSTDSRESFQRVELLKKEIDKSKDKKEVTIVVLGNKCDLQEQRRVDPDVAQHWAKSEKVKLWEVSVADRRSLLEPFVYLASKMTQPQSKSAFPLSRKNKGSGSLDG</sequence>
<gene>
    <name type="primary">NKIRAS2</name>
    <name type="synonym">KBRAS2</name>
</gene>
<keyword id="KW-0025">Alternative splicing</keyword>
<keyword id="KW-0963">Cytoplasm</keyword>
<keyword id="KW-0342">GTP-binding</keyword>
<keyword id="KW-0547">Nucleotide-binding</keyword>
<keyword id="KW-1267">Proteomics identification</keyword>
<keyword id="KW-1185">Reference proteome</keyword>
<name>KBRS2_HUMAN</name>
<accession>Q9NYR9</accession>
<accession>A6NCZ5</accession>
<accession>B3KNN0</accession>
<accession>B4DNM3</accession>
<accession>Q6PK52</accession>
<accession>Q96KC7</accession>
<accession>Q9NSX1</accession>
<comment type="function">
    <text evidence="1">Atypical Ras-like protein that acts as a potent regulator of NF-kappa-B activity by preventing the degradation of NF-kappa-B inhibitor beta (NFKBIB) by most signals, explaining why NFKBIB is more resistant to degradation. May act by blocking phosphorylation of NFKBIB and nuclear localization of p65/RELA NF-kappa-B subunit. It is unclear whether it acts as a GTPase. Both GTP- and GDP-bound forms block phosphorylation of NFKBIB (By similarity).</text>
</comment>
<comment type="subunit">
    <text evidence="3 4">Interacts with both NF-kappa-B inhibitor alpha (NFKBIA) and beta (NFKBIB) in vitro. However, it probably only interacts with NFKBIB in vivo. Interacts with GFOD1 (PubMed:38946427).</text>
</comment>
<comment type="subcellular location">
    <subcellularLocation>
        <location evidence="1">Cytoplasm</location>
    </subcellularLocation>
</comment>
<comment type="alternative products">
    <event type="alternative splicing"/>
    <isoform>
        <id>Q9NYR9-1</id>
        <name>1</name>
        <sequence type="displayed"/>
    </isoform>
    <isoform>
        <id>Q9NYR9-2</id>
        <name>2</name>
        <sequence type="described" ref="VSP_017412"/>
    </isoform>
    <isoform>
        <id>Q9NYR9-3</id>
        <name>3</name>
        <sequence type="described" ref="VSP_043151"/>
    </isoform>
    <isoform>
        <id>Q9NYR9-4</id>
        <name>4</name>
        <sequence type="described" ref="VSP_044873 VSP_044874"/>
    </isoform>
</comment>
<comment type="tissue specificity">
    <text evidence="3">Widely expressed.</text>
</comment>
<comment type="domain">
    <text>In contrast to other members of the Ras family, the members of the KappaB-Ras subfamily do not contain the conserved Gly and Gln residues in positions 13 and 65, which are replaced by Ala and Leu residues, respectively, and are therefore similar to the constitutively active forms of oncogenic forms of Ras. This suggests that members of this family are clearly different from other small GTPases proteins.</text>
</comment>
<comment type="similarity">
    <text evidence="7">Belongs to the small GTPase superfamily. Ras family. KappaB-Ras subfamily.</text>
</comment>
<comment type="sequence caution" evidence="7">
    <conflict type="miscellaneous discrepancy">
        <sequence resource="EMBL-CDS" id="BAB55006"/>
    </conflict>
    <text>Absence of residues from position 133 within an exon that change the frame which is not the result of an alternative splicing.</text>
</comment>
<organism>
    <name type="scientific">Homo sapiens</name>
    <name type="common">Human</name>
    <dbReference type="NCBI Taxonomy" id="9606"/>
    <lineage>
        <taxon>Eukaryota</taxon>
        <taxon>Metazoa</taxon>
        <taxon>Chordata</taxon>
        <taxon>Craniata</taxon>
        <taxon>Vertebrata</taxon>
        <taxon>Euteleostomi</taxon>
        <taxon>Mammalia</taxon>
        <taxon>Eutheria</taxon>
        <taxon>Euarchontoglires</taxon>
        <taxon>Primates</taxon>
        <taxon>Haplorrhini</taxon>
        <taxon>Catarrhini</taxon>
        <taxon>Hominidae</taxon>
        <taxon>Homo</taxon>
    </lineage>
</organism>
<reference key="1">
    <citation type="journal article" date="2000" name="Science">
        <title>A subclass of Ras proteins that regulate the degradation of IkappaB.</title>
        <authorList>
            <person name="Fenwick C."/>
            <person name="Na S.-Y."/>
            <person name="Voll R.E."/>
            <person name="Zhong H."/>
            <person name="Im S.-Y."/>
            <person name="Lee J.W."/>
            <person name="Ghosh S."/>
        </authorList>
    </citation>
    <scope>NUCLEOTIDE SEQUENCE [MRNA] (ISOFORM 1)</scope>
    <scope>TISSUE SPECIFICITY</scope>
    <scope>INTERACTION WITH NFKBIA AND NFKBIB</scope>
</reference>
<reference key="2">
    <citation type="journal article" date="2004" name="Nat. Genet.">
        <title>Complete sequencing and characterization of 21,243 full-length human cDNAs.</title>
        <authorList>
            <person name="Ota T."/>
            <person name="Suzuki Y."/>
            <person name="Nishikawa T."/>
            <person name="Otsuki T."/>
            <person name="Sugiyama T."/>
            <person name="Irie R."/>
            <person name="Wakamatsu A."/>
            <person name="Hayashi K."/>
            <person name="Sato H."/>
            <person name="Nagai K."/>
            <person name="Kimura K."/>
            <person name="Makita H."/>
            <person name="Sekine M."/>
            <person name="Obayashi M."/>
            <person name="Nishi T."/>
            <person name="Shibahara T."/>
            <person name="Tanaka T."/>
            <person name="Ishii S."/>
            <person name="Yamamoto J."/>
            <person name="Saito K."/>
            <person name="Kawai Y."/>
            <person name="Isono Y."/>
            <person name="Nakamura Y."/>
            <person name="Nagahari K."/>
            <person name="Murakami K."/>
            <person name="Yasuda T."/>
            <person name="Iwayanagi T."/>
            <person name="Wagatsuma M."/>
            <person name="Shiratori A."/>
            <person name="Sudo H."/>
            <person name="Hosoiri T."/>
            <person name="Kaku Y."/>
            <person name="Kodaira H."/>
            <person name="Kondo H."/>
            <person name="Sugawara M."/>
            <person name="Takahashi M."/>
            <person name="Kanda K."/>
            <person name="Yokoi T."/>
            <person name="Furuya T."/>
            <person name="Kikkawa E."/>
            <person name="Omura Y."/>
            <person name="Abe K."/>
            <person name="Kamihara K."/>
            <person name="Katsuta N."/>
            <person name="Sato K."/>
            <person name="Tanikawa M."/>
            <person name="Yamazaki M."/>
            <person name="Ninomiya K."/>
            <person name="Ishibashi T."/>
            <person name="Yamashita H."/>
            <person name="Murakawa K."/>
            <person name="Fujimori K."/>
            <person name="Tanai H."/>
            <person name="Kimata M."/>
            <person name="Watanabe M."/>
            <person name="Hiraoka S."/>
            <person name="Chiba Y."/>
            <person name="Ishida S."/>
            <person name="Ono Y."/>
            <person name="Takiguchi S."/>
            <person name="Watanabe S."/>
            <person name="Yosida M."/>
            <person name="Hotuta T."/>
            <person name="Kusano J."/>
            <person name="Kanehori K."/>
            <person name="Takahashi-Fujii A."/>
            <person name="Hara H."/>
            <person name="Tanase T.-O."/>
            <person name="Nomura Y."/>
            <person name="Togiya S."/>
            <person name="Komai F."/>
            <person name="Hara R."/>
            <person name="Takeuchi K."/>
            <person name="Arita M."/>
            <person name="Imose N."/>
            <person name="Musashino K."/>
            <person name="Yuuki H."/>
            <person name="Oshima A."/>
            <person name="Sasaki N."/>
            <person name="Aotsuka S."/>
            <person name="Yoshikawa Y."/>
            <person name="Matsunawa H."/>
            <person name="Ichihara T."/>
            <person name="Shiohata N."/>
            <person name="Sano S."/>
            <person name="Moriya S."/>
            <person name="Momiyama H."/>
            <person name="Satoh N."/>
            <person name="Takami S."/>
            <person name="Terashima Y."/>
            <person name="Suzuki O."/>
            <person name="Nakagawa S."/>
            <person name="Senoh A."/>
            <person name="Mizoguchi H."/>
            <person name="Goto Y."/>
            <person name="Shimizu F."/>
            <person name="Wakebe H."/>
            <person name="Hishigaki H."/>
            <person name="Watanabe T."/>
            <person name="Sugiyama A."/>
            <person name="Takemoto M."/>
            <person name="Kawakami B."/>
            <person name="Yamazaki M."/>
            <person name="Watanabe K."/>
            <person name="Kumagai A."/>
            <person name="Itakura S."/>
            <person name="Fukuzumi Y."/>
            <person name="Fujimori Y."/>
            <person name="Komiyama M."/>
            <person name="Tashiro H."/>
            <person name="Tanigami A."/>
            <person name="Fujiwara T."/>
            <person name="Ono T."/>
            <person name="Yamada K."/>
            <person name="Fujii Y."/>
            <person name="Ozaki K."/>
            <person name="Hirao M."/>
            <person name="Ohmori Y."/>
            <person name="Kawabata A."/>
            <person name="Hikiji T."/>
            <person name="Kobatake N."/>
            <person name="Inagaki H."/>
            <person name="Ikema Y."/>
            <person name="Okamoto S."/>
            <person name="Okitani R."/>
            <person name="Kawakami T."/>
            <person name="Noguchi S."/>
            <person name="Itoh T."/>
            <person name="Shigeta K."/>
            <person name="Senba T."/>
            <person name="Matsumura K."/>
            <person name="Nakajima Y."/>
            <person name="Mizuno T."/>
            <person name="Morinaga M."/>
            <person name="Sasaki M."/>
            <person name="Togashi T."/>
            <person name="Oyama M."/>
            <person name="Hata H."/>
            <person name="Watanabe M."/>
            <person name="Komatsu T."/>
            <person name="Mizushima-Sugano J."/>
            <person name="Satoh T."/>
            <person name="Shirai Y."/>
            <person name="Takahashi Y."/>
            <person name="Nakagawa K."/>
            <person name="Okumura K."/>
            <person name="Nagase T."/>
            <person name="Nomura N."/>
            <person name="Kikuchi H."/>
            <person name="Masuho Y."/>
            <person name="Yamashita R."/>
            <person name="Nakai K."/>
            <person name="Yada T."/>
            <person name="Nakamura Y."/>
            <person name="Ohara O."/>
            <person name="Isogai T."/>
            <person name="Sugano S."/>
        </authorList>
    </citation>
    <scope>NUCLEOTIDE SEQUENCE [LARGE SCALE MRNA] (ISOFORMS 1; 3 AND 4)</scope>
    <source>
        <tissue>Embryo</tissue>
        <tissue>Thymus</tissue>
    </source>
</reference>
<reference key="3">
    <citation type="journal article" date="2007" name="BMC Genomics">
        <title>The full-ORF clone resource of the German cDNA consortium.</title>
        <authorList>
            <person name="Bechtel S."/>
            <person name="Rosenfelder H."/>
            <person name="Duda A."/>
            <person name="Schmidt C.P."/>
            <person name="Ernst U."/>
            <person name="Wellenreuther R."/>
            <person name="Mehrle A."/>
            <person name="Schuster C."/>
            <person name="Bahr A."/>
            <person name="Bloecker H."/>
            <person name="Heubner D."/>
            <person name="Hoerlein A."/>
            <person name="Michel G."/>
            <person name="Wedler H."/>
            <person name="Koehrer K."/>
            <person name="Ottenwaelder B."/>
            <person name="Poustka A."/>
            <person name="Wiemann S."/>
            <person name="Schupp I."/>
        </authorList>
    </citation>
    <scope>NUCLEOTIDE SEQUENCE [LARGE SCALE MRNA] (ISOFORM 2)</scope>
    <source>
        <tissue>Testis</tissue>
    </source>
</reference>
<reference key="4">
    <citation type="submission" date="2005-12" db="EMBL/GenBank/DDBJ databases">
        <authorList>
            <consortium name="NHLBI resequencing and genotyping service (RS&amp;G)"/>
        </authorList>
    </citation>
    <scope>NUCLEOTIDE SEQUENCE [GENOMIC DNA]</scope>
</reference>
<reference key="5">
    <citation type="journal article" date="2006" name="Nature">
        <title>DNA sequence of human chromosome 17 and analysis of rearrangement in the human lineage.</title>
        <authorList>
            <person name="Zody M.C."/>
            <person name="Garber M."/>
            <person name="Adams D.J."/>
            <person name="Sharpe T."/>
            <person name="Harrow J."/>
            <person name="Lupski J.R."/>
            <person name="Nicholson C."/>
            <person name="Searle S.M."/>
            <person name="Wilming L."/>
            <person name="Young S.K."/>
            <person name="Abouelleil A."/>
            <person name="Allen N.R."/>
            <person name="Bi W."/>
            <person name="Bloom T."/>
            <person name="Borowsky M.L."/>
            <person name="Bugalter B.E."/>
            <person name="Butler J."/>
            <person name="Chang J.L."/>
            <person name="Chen C.-K."/>
            <person name="Cook A."/>
            <person name="Corum B."/>
            <person name="Cuomo C.A."/>
            <person name="de Jong P.J."/>
            <person name="DeCaprio D."/>
            <person name="Dewar K."/>
            <person name="FitzGerald M."/>
            <person name="Gilbert J."/>
            <person name="Gibson R."/>
            <person name="Gnerre S."/>
            <person name="Goldstein S."/>
            <person name="Grafham D.V."/>
            <person name="Grocock R."/>
            <person name="Hafez N."/>
            <person name="Hagopian D.S."/>
            <person name="Hart E."/>
            <person name="Norman C.H."/>
            <person name="Humphray S."/>
            <person name="Jaffe D.B."/>
            <person name="Jones M."/>
            <person name="Kamal M."/>
            <person name="Khodiyar V.K."/>
            <person name="LaButti K."/>
            <person name="Laird G."/>
            <person name="Lehoczky J."/>
            <person name="Liu X."/>
            <person name="Lokyitsang T."/>
            <person name="Loveland J."/>
            <person name="Lui A."/>
            <person name="Macdonald P."/>
            <person name="Major J.E."/>
            <person name="Matthews L."/>
            <person name="Mauceli E."/>
            <person name="McCarroll S.A."/>
            <person name="Mihalev A.H."/>
            <person name="Mudge J."/>
            <person name="Nguyen C."/>
            <person name="Nicol R."/>
            <person name="O'Leary S.B."/>
            <person name="Osoegawa K."/>
            <person name="Schwartz D.C."/>
            <person name="Shaw-Smith C."/>
            <person name="Stankiewicz P."/>
            <person name="Steward C."/>
            <person name="Swarbreck D."/>
            <person name="Venkataraman V."/>
            <person name="Whittaker C.A."/>
            <person name="Yang X."/>
            <person name="Zimmer A.R."/>
            <person name="Bradley A."/>
            <person name="Hubbard T."/>
            <person name="Birren B.W."/>
            <person name="Rogers J."/>
            <person name="Lander E.S."/>
            <person name="Nusbaum C."/>
        </authorList>
    </citation>
    <scope>NUCLEOTIDE SEQUENCE [LARGE SCALE GENOMIC DNA]</scope>
</reference>
<reference key="6">
    <citation type="submission" date="2005-07" db="EMBL/GenBank/DDBJ databases">
        <authorList>
            <person name="Mural R.J."/>
            <person name="Istrail S."/>
            <person name="Sutton G.G."/>
            <person name="Florea L."/>
            <person name="Halpern A.L."/>
            <person name="Mobarry C.M."/>
            <person name="Lippert R."/>
            <person name="Walenz B."/>
            <person name="Shatkay H."/>
            <person name="Dew I."/>
            <person name="Miller J.R."/>
            <person name="Flanigan M.J."/>
            <person name="Edwards N.J."/>
            <person name="Bolanos R."/>
            <person name="Fasulo D."/>
            <person name="Halldorsson B.V."/>
            <person name="Hannenhalli S."/>
            <person name="Turner R."/>
            <person name="Yooseph S."/>
            <person name="Lu F."/>
            <person name="Nusskern D.R."/>
            <person name="Shue B.C."/>
            <person name="Zheng X.H."/>
            <person name="Zhong F."/>
            <person name="Delcher A.L."/>
            <person name="Huson D.H."/>
            <person name="Kravitz S.A."/>
            <person name="Mouchard L."/>
            <person name="Reinert K."/>
            <person name="Remington K.A."/>
            <person name="Clark A.G."/>
            <person name="Waterman M.S."/>
            <person name="Eichler E.E."/>
            <person name="Adams M.D."/>
            <person name="Hunkapiller M.W."/>
            <person name="Myers E.W."/>
            <person name="Venter J.C."/>
        </authorList>
    </citation>
    <scope>NUCLEOTIDE SEQUENCE [LARGE SCALE GENOMIC DNA]</scope>
</reference>
<reference key="7">
    <citation type="journal article" date="2004" name="Genome Res.">
        <title>The status, quality, and expansion of the NIH full-length cDNA project: the Mammalian Gene Collection (MGC).</title>
        <authorList>
            <consortium name="The MGC Project Team"/>
        </authorList>
    </citation>
    <scope>NUCLEOTIDE SEQUENCE [LARGE SCALE MRNA] (ISOFORM 1)</scope>
    <source>
        <tissue>Brain</tissue>
        <tissue>Muscle</tissue>
    </source>
</reference>
<reference key="8">
    <citation type="journal article" date="2011" name="BMC Syst. Biol.">
        <title>Initial characterization of the human central proteome.</title>
        <authorList>
            <person name="Burkard T.R."/>
            <person name="Planyavsky M."/>
            <person name="Kaupe I."/>
            <person name="Breitwieser F.P."/>
            <person name="Buerckstuemmer T."/>
            <person name="Bennett K.L."/>
            <person name="Superti-Furga G."/>
            <person name="Colinge J."/>
        </authorList>
    </citation>
    <scope>IDENTIFICATION BY MASS SPECTROMETRY [LARGE SCALE ANALYSIS]</scope>
</reference>
<reference key="9">
    <citation type="journal article" date="2024" name="Acta Biochim. Biophys. Sin.">
        <title>Molecular insight into the potential functional role of pseudoenzyme GFOD1 via interaction with NKIRAS2.</title>
        <authorList>
            <person name="Shi J."/>
            <person name="Guo X."/>
            <person name="Liu C."/>
            <person name="Wang Y."/>
            <person name="Chen X."/>
            <person name="Wu G."/>
            <person name="Ding J."/>
            <person name="Zhang T."/>
        </authorList>
    </citation>
    <scope>INTERACTION WITH GFOD1</scope>
    <scope>MUTAGENESIS OF ASP-41; ILE-42 AND VAL-44</scope>
</reference>
<evidence type="ECO:0000250" key="1"/>
<evidence type="ECO:0000256" key="2">
    <source>
        <dbReference type="SAM" id="MobiDB-lite"/>
    </source>
</evidence>
<evidence type="ECO:0000269" key="3">
    <source>
    </source>
</evidence>
<evidence type="ECO:0000269" key="4">
    <source>
    </source>
</evidence>
<evidence type="ECO:0000303" key="5">
    <source>
    </source>
</evidence>
<evidence type="ECO:0000303" key="6">
    <source>
    </source>
</evidence>
<evidence type="ECO:0000305" key="7"/>
<feature type="chain" id="PRO_0000225679" description="NF-kappa-B inhibitor-interacting Ras-like protein 2">
    <location>
        <begin position="1"/>
        <end position="191"/>
    </location>
</feature>
<feature type="region of interest" description="Small GTPase-like">
    <location>
        <begin position="1"/>
        <end position="191"/>
    </location>
</feature>
<feature type="region of interest" description="Disordered" evidence="2">
    <location>
        <begin position="169"/>
        <end position="191"/>
    </location>
</feature>
<feature type="short sequence motif" description="Effector region">
    <location>
        <begin position="35"/>
        <end position="43"/>
    </location>
</feature>
<feature type="binding site" evidence="1">
    <location>
        <begin position="11"/>
        <end position="18"/>
    </location>
    <ligand>
        <name>GTP</name>
        <dbReference type="ChEBI" id="CHEBI:37565"/>
    </ligand>
</feature>
<feature type="binding site" evidence="1">
    <location>
        <begin position="61"/>
        <end position="65"/>
    </location>
    <ligand>
        <name>GTP</name>
        <dbReference type="ChEBI" id="CHEBI:37565"/>
    </ligand>
</feature>
<feature type="binding site" evidence="1">
    <location>
        <begin position="120"/>
        <end position="123"/>
    </location>
    <ligand>
        <name>GTP</name>
        <dbReference type="ChEBI" id="CHEBI:37565"/>
    </ligand>
</feature>
<feature type="splice variant" id="VSP_017412" description="In isoform 2." evidence="6">
    <location>
        <begin position="33"/>
        <end position="34"/>
    </location>
</feature>
<feature type="splice variant" id="VSP_043151" description="In isoform 3." evidence="5">
    <location>
        <begin position="57"/>
        <end position="112"/>
    </location>
</feature>
<feature type="splice variant" id="VSP_044873" description="In isoform 4." evidence="5">
    <original>VRFYDTRGLRDGAELPRHCFSCTDGYVLVYSTDSRESFQRV</original>
    <variation>IAESLFSVWSCSRRRLTNPRTRRRSPSWSLATSVTYRSSGV</variation>
    <location>
        <begin position="57"/>
        <end position="97"/>
    </location>
</feature>
<feature type="splice variant" id="VSP_044874" description="In isoform 4." evidence="5">
    <location>
        <begin position="98"/>
        <end position="191"/>
    </location>
</feature>
<feature type="mutagenesis site" description="Does not affect interaction with GFOD1." evidence="4">
    <original>D</original>
    <variation>L</variation>
    <location>
        <position position="41"/>
    </location>
</feature>
<feature type="mutagenesis site" description="Impairs the interaction with GFOD1." evidence="4">
    <original>I</original>
    <variation>D</variation>
    <location>
        <position position="42"/>
    </location>
</feature>
<feature type="mutagenesis site" description="Does not affect interaction with GFOD1." evidence="4">
    <original>V</original>
    <variation>D</variation>
    <location>
        <position position="44"/>
    </location>
</feature>